<accession>A4WQB2</accession>
<keyword id="KW-0687">Ribonucleoprotein</keyword>
<keyword id="KW-0689">Ribosomal protein</keyword>
<gene>
    <name evidence="1" type="primary">rpmG</name>
    <name type="ordered locus">Rsph17025_0670</name>
</gene>
<protein>
    <recommendedName>
        <fullName evidence="1">Large ribosomal subunit protein bL33</fullName>
    </recommendedName>
    <alternativeName>
        <fullName evidence="2">50S ribosomal protein L33</fullName>
    </alternativeName>
</protein>
<feature type="chain" id="PRO_0000356627" description="Large ribosomal subunit protein bL33">
    <location>
        <begin position="1"/>
        <end position="55"/>
    </location>
</feature>
<dbReference type="EMBL" id="CP000661">
    <property type="protein sequence ID" value="ABP69576.1"/>
    <property type="molecule type" value="Genomic_DNA"/>
</dbReference>
<dbReference type="SMR" id="A4WQB2"/>
<dbReference type="STRING" id="349102.Rsph17025_0670"/>
<dbReference type="KEGG" id="rsq:Rsph17025_0670"/>
<dbReference type="eggNOG" id="COG0267">
    <property type="taxonomic scope" value="Bacteria"/>
</dbReference>
<dbReference type="HOGENOM" id="CLU_190949_1_1_5"/>
<dbReference type="BioCyc" id="RSPH349102:G1G8M-692-MONOMER"/>
<dbReference type="GO" id="GO:0022625">
    <property type="term" value="C:cytosolic large ribosomal subunit"/>
    <property type="evidence" value="ECO:0007669"/>
    <property type="project" value="TreeGrafter"/>
</dbReference>
<dbReference type="GO" id="GO:0003735">
    <property type="term" value="F:structural constituent of ribosome"/>
    <property type="evidence" value="ECO:0007669"/>
    <property type="project" value="InterPro"/>
</dbReference>
<dbReference type="GO" id="GO:0006412">
    <property type="term" value="P:translation"/>
    <property type="evidence" value="ECO:0007669"/>
    <property type="project" value="UniProtKB-UniRule"/>
</dbReference>
<dbReference type="Gene3D" id="2.20.28.120">
    <property type="entry name" value="Ribosomal protein L33"/>
    <property type="match status" value="1"/>
</dbReference>
<dbReference type="HAMAP" id="MF_00294">
    <property type="entry name" value="Ribosomal_bL33"/>
    <property type="match status" value="1"/>
</dbReference>
<dbReference type="InterPro" id="IPR001705">
    <property type="entry name" value="Ribosomal_bL33"/>
</dbReference>
<dbReference type="InterPro" id="IPR018264">
    <property type="entry name" value="Ribosomal_bL33_CS"/>
</dbReference>
<dbReference type="InterPro" id="IPR038584">
    <property type="entry name" value="Ribosomal_bL33_sf"/>
</dbReference>
<dbReference type="InterPro" id="IPR011332">
    <property type="entry name" value="Ribosomal_zn-bd"/>
</dbReference>
<dbReference type="NCBIfam" id="NF001860">
    <property type="entry name" value="PRK00595.1"/>
    <property type="match status" value="1"/>
</dbReference>
<dbReference type="NCBIfam" id="TIGR01023">
    <property type="entry name" value="rpmG_bact"/>
    <property type="match status" value="1"/>
</dbReference>
<dbReference type="PANTHER" id="PTHR15238">
    <property type="entry name" value="54S RIBOSOMAL PROTEIN L39, MITOCHONDRIAL"/>
    <property type="match status" value="1"/>
</dbReference>
<dbReference type="PANTHER" id="PTHR15238:SF1">
    <property type="entry name" value="LARGE RIBOSOMAL SUBUNIT PROTEIN BL33M"/>
    <property type="match status" value="1"/>
</dbReference>
<dbReference type="Pfam" id="PF00471">
    <property type="entry name" value="Ribosomal_L33"/>
    <property type="match status" value="1"/>
</dbReference>
<dbReference type="SUPFAM" id="SSF57829">
    <property type="entry name" value="Zn-binding ribosomal proteins"/>
    <property type="match status" value="1"/>
</dbReference>
<dbReference type="PROSITE" id="PS00582">
    <property type="entry name" value="RIBOSOMAL_L33"/>
    <property type="match status" value="1"/>
</dbReference>
<reference key="1">
    <citation type="submission" date="2007-04" db="EMBL/GenBank/DDBJ databases">
        <title>Complete sequence of chromosome of Rhodobacter sphaeroides ATCC 17025.</title>
        <authorList>
            <consortium name="US DOE Joint Genome Institute"/>
            <person name="Copeland A."/>
            <person name="Lucas S."/>
            <person name="Lapidus A."/>
            <person name="Barry K."/>
            <person name="Detter J.C."/>
            <person name="Glavina del Rio T."/>
            <person name="Hammon N."/>
            <person name="Israni S."/>
            <person name="Dalin E."/>
            <person name="Tice H."/>
            <person name="Pitluck S."/>
            <person name="Chertkov O."/>
            <person name="Brettin T."/>
            <person name="Bruce D."/>
            <person name="Han C."/>
            <person name="Schmutz J."/>
            <person name="Larimer F."/>
            <person name="Land M."/>
            <person name="Hauser L."/>
            <person name="Kyrpides N."/>
            <person name="Kim E."/>
            <person name="Richardson P."/>
            <person name="Mackenzie C."/>
            <person name="Choudhary M."/>
            <person name="Donohue T.J."/>
            <person name="Kaplan S."/>
        </authorList>
    </citation>
    <scope>NUCLEOTIDE SEQUENCE [LARGE SCALE GENOMIC DNA]</scope>
    <source>
        <strain>ATCC 17025 / ATH 2.4.3</strain>
    </source>
</reference>
<evidence type="ECO:0000255" key="1">
    <source>
        <dbReference type="HAMAP-Rule" id="MF_00294"/>
    </source>
</evidence>
<evidence type="ECO:0000305" key="2"/>
<sequence>MAKPTTIKIRLNSTAGTGHFYVTKKNARTMTDKMVVRKYDPVKREHVEYKEGKIK</sequence>
<name>RL33_CERS5</name>
<organism>
    <name type="scientific">Cereibacter sphaeroides (strain ATCC 17025 / ATH 2.4.3)</name>
    <name type="common">Rhodobacter sphaeroides</name>
    <dbReference type="NCBI Taxonomy" id="349102"/>
    <lineage>
        <taxon>Bacteria</taxon>
        <taxon>Pseudomonadati</taxon>
        <taxon>Pseudomonadota</taxon>
        <taxon>Alphaproteobacteria</taxon>
        <taxon>Rhodobacterales</taxon>
        <taxon>Paracoccaceae</taxon>
        <taxon>Cereibacter</taxon>
    </lineage>
</organism>
<comment type="similarity">
    <text evidence="1">Belongs to the bacterial ribosomal protein bL33 family.</text>
</comment>
<proteinExistence type="inferred from homology"/>